<protein>
    <recommendedName>
        <fullName evidence="1">Protein GrpE</fullName>
    </recommendedName>
    <alternativeName>
        <fullName evidence="1">HSP-70 cofactor</fullName>
    </alternativeName>
</protein>
<reference key="1">
    <citation type="journal article" date="2006" name="Genome Biol.">
        <title>The genome of Rhizobium leguminosarum has recognizable core and accessory components.</title>
        <authorList>
            <person name="Young J.P.W."/>
            <person name="Crossman L.C."/>
            <person name="Johnston A.W.B."/>
            <person name="Thomson N.R."/>
            <person name="Ghazoui Z.F."/>
            <person name="Hull K.H."/>
            <person name="Wexler M."/>
            <person name="Curson A.R.J."/>
            <person name="Todd J.D."/>
            <person name="Poole P.S."/>
            <person name="Mauchline T.H."/>
            <person name="East A.K."/>
            <person name="Quail M.A."/>
            <person name="Churcher C."/>
            <person name="Arrowsmith C."/>
            <person name="Cherevach I."/>
            <person name="Chillingworth T."/>
            <person name="Clarke K."/>
            <person name="Cronin A."/>
            <person name="Davis P."/>
            <person name="Fraser A."/>
            <person name="Hance Z."/>
            <person name="Hauser H."/>
            <person name="Jagels K."/>
            <person name="Moule S."/>
            <person name="Mungall K."/>
            <person name="Norbertczak H."/>
            <person name="Rabbinowitsch E."/>
            <person name="Sanders M."/>
            <person name="Simmonds M."/>
            <person name="Whitehead S."/>
            <person name="Parkhill J."/>
        </authorList>
    </citation>
    <scope>NUCLEOTIDE SEQUENCE [LARGE SCALE GENOMIC DNA]</scope>
    <source>
        <strain>DSM 114642 / LMG 32736 / 3841</strain>
    </source>
</reference>
<sequence>MTDDTTKNGPDATAADAAADATAYVENETAQQEPAQPDPIELLKAENGELRDRYLRLAAEMDNLRRRTEREVKDAKSYSVAGFARDMLAVSDNLRRALDAISPETKATADAGLSTLIEGVEMTERAMLSALERHGVRKLEPVGQKFDPNFHQAMFEVPNPDVPNNTVVQVVQAGFTIGERVLRPAMVGVAKGGPKPAEAETNSVFDEKDA</sequence>
<comment type="function">
    <text evidence="1">Participates actively in the response to hyperosmotic and heat shock by preventing the aggregation of stress-denatured proteins, in association with DnaK and GrpE. It is the nucleotide exchange factor for DnaK and may function as a thermosensor. Unfolded proteins bind initially to DnaJ; upon interaction with the DnaJ-bound protein, DnaK hydrolyzes its bound ATP, resulting in the formation of a stable complex. GrpE releases ADP from DnaK; ATP binding to DnaK triggers the release of the substrate protein, thus completing the reaction cycle. Several rounds of ATP-dependent interactions between DnaJ, DnaK and GrpE are required for fully efficient folding.</text>
</comment>
<comment type="subunit">
    <text evidence="1">Homodimer.</text>
</comment>
<comment type="subcellular location">
    <subcellularLocation>
        <location evidence="1">Cytoplasm</location>
    </subcellularLocation>
</comment>
<comment type="similarity">
    <text evidence="1">Belongs to the GrpE family.</text>
</comment>
<keyword id="KW-0143">Chaperone</keyword>
<keyword id="KW-0963">Cytoplasm</keyword>
<keyword id="KW-0346">Stress response</keyword>
<feature type="chain" id="PRO_1000053631" description="Protein GrpE">
    <location>
        <begin position="1"/>
        <end position="210"/>
    </location>
</feature>
<feature type="region of interest" description="Disordered" evidence="2">
    <location>
        <begin position="1"/>
        <end position="40"/>
    </location>
</feature>
<feature type="region of interest" description="Disordered" evidence="2">
    <location>
        <begin position="191"/>
        <end position="210"/>
    </location>
</feature>
<feature type="compositionally biased region" description="Low complexity" evidence="2">
    <location>
        <begin position="11"/>
        <end position="23"/>
    </location>
</feature>
<evidence type="ECO:0000255" key="1">
    <source>
        <dbReference type="HAMAP-Rule" id="MF_01151"/>
    </source>
</evidence>
<evidence type="ECO:0000256" key="2">
    <source>
        <dbReference type="SAM" id="MobiDB-lite"/>
    </source>
</evidence>
<dbReference type="EMBL" id="AM236080">
    <property type="protein sequence ID" value="CAK05873.1"/>
    <property type="molecule type" value="Genomic_DNA"/>
</dbReference>
<dbReference type="RefSeq" id="WP_011650183.1">
    <property type="nucleotide sequence ID" value="NC_008380.1"/>
</dbReference>
<dbReference type="SMR" id="Q1MMC9"/>
<dbReference type="EnsemblBacteria" id="CAK05873">
    <property type="protein sequence ID" value="CAK05873"/>
    <property type="gene ID" value="RL0382"/>
</dbReference>
<dbReference type="KEGG" id="rle:RL0382"/>
<dbReference type="eggNOG" id="COG0576">
    <property type="taxonomic scope" value="Bacteria"/>
</dbReference>
<dbReference type="HOGENOM" id="CLU_057217_0_2_5"/>
<dbReference type="Proteomes" id="UP000006575">
    <property type="component" value="Chromosome"/>
</dbReference>
<dbReference type="GO" id="GO:0005737">
    <property type="term" value="C:cytoplasm"/>
    <property type="evidence" value="ECO:0007669"/>
    <property type="project" value="UniProtKB-SubCell"/>
</dbReference>
<dbReference type="GO" id="GO:0000774">
    <property type="term" value="F:adenyl-nucleotide exchange factor activity"/>
    <property type="evidence" value="ECO:0007669"/>
    <property type="project" value="InterPro"/>
</dbReference>
<dbReference type="GO" id="GO:0042803">
    <property type="term" value="F:protein homodimerization activity"/>
    <property type="evidence" value="ECO:0007669"/>
    <property type="project" value="InterPro"/>
</dbReference>
<dbReference type="GO" id="GO:0051087">
    <property type="term" value="F:protein-folding chaperone binding"/>
    <property type="evidence" value="ECO:0007669"/>
    <property type="project" value="InterPro"/>
</dbReference>
<dbReference type="GO" id="GO:0051082">
    <property type="term" value="F:unfolded protein binding"/>
    <property type="evidence" value="ECO:0007669"/>
    <property type="project" value="TreeGrafter"/>
</dbReference>
<dbReference type="GO" id="GO:0006457">
    <property type="term" value="P:protein folding"/>
    <property type="evidence" value="ECO:0007669"/>
    <property type="project" value="InterPro"/>
</dbReference>
<dbReference type="CDD" id="cd00446">
    <property type="entry name" value="GrpE"/>
    <property type="match status" value="1"/>
</dbReference>
<dbReference type="FunFam" id="2.30.22.10:FF:000001">
    <property type="entry name" value="Protein GrpE"/>
    <property type="match status" value="1"/>
</dbReference>
<dbReference type="Gene3D" id="3.90.20.20">
    <property type="match status" value="1"/>
</dbReference>
<dbReference type="Gene3D" id="2.30.22.10">
    <property type="entry name" value="Head domain of nucleotide exchange factor GrpE"/>
    <property type="match status" value="1"/>
</dbReference>
<dbReference type="HAMAP" id="MF_01151">
    <property type="entry name" value="GrpE"/>
    <property type="match status" value="1"/>
</dbReference>
<dbReference type="InterPro" id="IPR000740">
    <property type="entry name" value="GrpE"/>
</dbReference>
<dbReference type="InterPro" id="IPR013805">
    <property type="entry name" value="GrpE_coiled_coil"/>
</dbReference>
<dbReference type="InterPro" id="IPR009012">
    <property type="entry name" value="GrpE_head"/>
</dbReference>
<dbReference type="NCBIfam" id="NF010738">
    <property type="entry name" value="PRK14140.1"/>
    <property type="match status" value="1"/>
</dbReference>
<dbReference type="NCBIfam" id="NF010739">
    <property type="entry name" value="PRK14141.1"/>
    <property type="match status" value="1"/>
</dbReference>
<dbReference type="NCBIfam" id="NF010748">
    <property type="entry name" value="PRK14150.1"/>
    <property type="match status" value="1"/>
</dbReference>
<dbReference type="PANTHER" id="PTHR21237">
    <property type="entry name" value="GRPE PROTEIN"/>
    <property type="match status" value="1"/>
</dbReference>
<dbReference type="PANTHER" id="PTHR21237:SF23">
    <property type="entry name" value="GRPE PROTEIN HOMOLOG, MITOCHONDRIAL"/>
    <property type="match status" value="1"/>
</dbReference>
<dbReference type="Pfam" id="PF01025">
    <property type="entry name" value="GrpE"/>
    <property type="match status" value="1"/>
</dbReference>
<dbReference type="PRINTS" id="PR00773">
    <property type="entry name" value="GRPEPROTEIN"/>
</dbReference>
<dbReference type="SUPFAM" id="SSF58014">
    <property type="entry name" value="Coiled-coil domain of nucleotide exchange factor GrpE"/>
    <property type="match status" value="1"/>
</dbReference>
<dbReference type="SUPFAM" id="SSF51064">
    <property type="entry name" value="Head domain of nucleotide exchange factor GrpE"/>
    <property type="match status" value="1"/>
</dbReference>
<dbReference type="PROSITE" id="PS01071">
    <property type="entry name" value="GRPE"/>
    <property type="match status" value="1"/>
</dbReference>
<gene>
    <name evidence="1" type="primary">grpE</name>
    <name type="ordered locus">RL0382</name>
</gene>
<accession>Q1MMC9</accession>
<organism>
    <name type="scientific">Rhizobium johnstonii (strain DSM 114642 / LMG 32736 / 3841)</name>
    <name type="common">Rhizobium leguminosarum bv. viciae</name>
    <dbReference type="NCBI Taxonomy" id="216596"/>
    <lineage>
        <taxon>Bacteria</taxon>
        <taxon>Pseudomonadati</taxon>
        <taxon>Pseudomonadota</taxon>
        <taxon>Alphaproteobacteria</taxon>
        <taxon>Hyphomicrobiales</taxon>
        <taxon>Rhizobiaceae</taxon>
        <taxon>Rhizobium/Agrobacterium group</taxon>
        <taxon>Rhizobium</taxon>
        <taxon>Rhizobium johnstonii</taxon>
    </lineage>
</organism>
<proteinExistence type="inferred from homology"/>
<name>GRPE_RHIJ3</name>